<evidence type="ECO:0000255" key="1">
    <source>
        <dbReference type="HAMAP-Rule" id="MF_00211"/>
    </source>
</evidence>
<keyword id="KW-0028">Amino-acid biosynthesis</keyword>
<keyword id="KW-0057">Aromatic amino acid biosynthesis</keyword>
<keyword id="KW-0328">Glycosyltransferase</keyword>
<keyword id="KW-0460">Magnesium</keyword>
<keyword id="KW-0479">Metal-binding</keyword>
<keyword id="KW-1185">Reference proteome</keyword>
<keyword id="KW-0808">Transferase</keyword>
<keyword id="KW-0822">Tryptophan biosynthesis</keyword>
<dbReference type="EC" id="2.4.2.18" evidence="1"/>
<dbReference type="EMBL" id="BX571965">
    <property type="protein sequence ID" value="CAH37063.1"/>
    <property type="molecule type" value="Genomic_DNA"/>
</dbReference>
<dbReference type="RefSeq" id="WP_004186823.1">
    <property type="nucleotide sequence ID" value="NZ_CP009538.1"/>
</dbReference>
<dbReference type="RefSeq" id="YP_109647.1">
    <property type="nucleotide sequence ID" value="NC_006350.1"/>
</dbReference>
<dbReference type="SMR" id="Q63QH1"/>
<dbReference type="STRING" id="272560.BPSL3052"/>
<dbReference type="GeneID" id="93061660"/>
<dbReference type="KEGG" id="bps:BPSL3052"/>
<dbReference type="PATRIC" id="fig|272560.51.peg.2213"/>
<dbReference type="eggNOG" id="COG0547">
    <property type="taxonomic scope" value="Bacteria"/>
</dbReference>
<dbReference type="UniPathway" id="UPA00035">
    <property type="reaction ID" value="UER00041"/>
</dbReference>
<dbReference type="Proteomes" id="UP000000605">
    <property type="component" value="Chromosome 1"/>
</dbReference>
<dbReference type="GO" id="GO:0005829">
    <property type="term" value="C:cytosol"/>
    <property type="evidence" value="ECO:0007669"/>
    <property type="project" value="TreeGrafter"/>
</dbReference>
<dbReference type="GO" id="GO:0004048">
    <property type="term" value="F:anthranilate phosphoribosyltransferase activity"/>
    <property type="evidence" value="ECO:0007669"/>
    <property type="project" value="UniProtKB-UniRule"/>
</dbReference>
<dbReference type="GO" id="GO:0000287">
    <property type="term" value="F:magnesium ion binding"/>
    <property type="evidence" value="ECO:0007669"/>
    <property type="project" value="UniProtKB-UniRule"/>
</dbReference>
<dbReference type="GO" id="GO:0000162">
    <property type="term" value="P:L-tryptophan biosynthetic process"/>
    <property type="evidence" value="ECO:0007669"/>
    <property type="project" value="UniProtKB-UniRule"/>
</dbReference>
<dbReference type="FunFam" id="1.20.970.10:FF:000006">
    <property type="entry name" value="Anthranilate phosphoribosyltransferase"/>
    <property type="match status" value="1"/>
</dbReference>
<dbReference type="FunFam" id="3.40.1030.10:FF:000002">
    <property type="entry name" value="Anthranilate phosphoribosyltransferase"/>
    <property type="match status" value="1"/>
</dbReference>
<dbReference type="Gene3D" id="3.40.1030.10">
    <property type="entry name" value="Nucleoside phosphorylase/phosphoribosyltransferase catalytic domain"/>
    <property type="match status" value="1"/>
</dbReference>
<dbReference type="Gene3D" id="1.20.970.10">
    <property type="entry name" value="Transferase, Pyrimidine Nucleoside Phosphorylase, Chain C"/>
    <property type="match status" value="1"/>
</dbReference>
<dbReference type="HAMAP" id="MF_00211">
    <property type="entry name" value="TrpD"/>
    <property type="match status" value="1"/>
</dbReference>
<dbReference type="InterPro" id="IPR005940">
    <property type="entry name" value="Anthranilate_Pribosyl_Tfrase"/>
</dbReference>
<dbReference type="InterPro" id="IPR000312">
    <property type="entry name" value="Glycosyl_Trfase_fam3"/>
</dbReference>
<dbReference type="InterPro" id="IPR017459">
    <property type="entry name" value="Glycosyl_Trfase_fam3_N_dom"/>
</dbReference>
<dbReference type="InterPro" id="IPR036320">
    <property type="entry name" value="Glycosyl_Trfase_fam3_N_dom_sf"/>
</dbReference>
<dbReference type="InterPro" id="IPR035902">
    <property type="entry name" value="Nuc_phospho_transferase"/>
</dbReference>
<dbReference type="NCBIfam" id="TIGR01245">
    <property type="entry name" value="trpD"/>
    <property type="match status" value="1"/>
</dbReference>
<dbReference type="PANTHER" id="PTHR43285">
    <property type="entry name" value="ANTHRANILATE PHOSPHORIBOSYLTRANSFERASE"/>
    <property type="match status" value="1"/>
</dbReference>
<dbReference type="PANTHER" id="PTHR43285:SF2">
    <property type="entry name" value="ANTHRANILATE PHOSPHORIBOSYLTRANSFERASE"/>
    <property type="match status" value="1"/>
</dbReference>
<dbReference type="Pfam" id="PF02885">
    <property type="entry name" value="Glycos_trans_3N"/>
    <property type="match status" value="1"/>
</dbReference>
<dbReference type="Pfam" id="PF00591">
    <property type="entry name" value="Glycos_transf_3"/>
    <property type="match status" value="1"/>
</dbReference>
<dbReference type="SUPFAM" id="SSF52418">
    <property type="entry name" value="Nucleoside phosphorylase/phosphoribosyltransferase catalytic domain"/>
    <property type="match status" value="1"/>
</dbReference>
<dbReference type="SUPFAM" id="SSF47648">
    <property type="entry name" value="Nucleoside phosphorylase/phosphoribosyltransferase N-terminal domain"/>
    <property type="match status" value="1"/>
</dbReference>
<comment type="function">
    <text evidence="1">Catalyzes the transfer of the phosphoribosyl group of 5-phosphorylribose-1-pyrophosphate (PRPP) to anthranilate to yield N-(5'-phosphoribosyl)-anthranilate (PRA).</text>
</comment>
<comment type="catalytic activity">
    <reaction evidence="1">
        <text>N-(5-phospho-beta-D-ribosyl)anthranilate + diphosphate = 5-phospho-alpha-D-ribose 1-diphosphate + anthranilate</text>
        <dbReference type="Rhea" id="RHEA:11768"/>
        <dbReference type="ChEBI" id="CHEBI:16567"/>
        <dbReference type="ChEBI" id="CHEBI:18277"/>
        <dbReference type="ChEBI" id="CHEBI:33019"/>
        <dbReference type="ChEBI" id="CHEBI:58017"/>
        <dbReference type="EC" id="2.4.2.18"/>
    </reaction>
</comment>
<comment type="cofactor">
    <cofactor evidence="1">
        <name>Mg(2+)</name>
        <dbReference type="ChEBI" id="CHEBI:18420"/>
    </cofactor>
    <text evidence="1">Binds 2 magnesium ions per monomer.</text>
</comment>
<comment type="pathway">
    <text evidence="1">Amino-acid biosynthesis; L-tryptophan biosynthesis; L-tryptophan from chorismate: step 2/5.</text>
</comment>
<comment type="subunit">
    <text evidence="1">Homodimer.</text>
</comment>
<comment type="similarity">
    <text evidence="1">Belongs to the anthranilate phosphoribosyltransferase family.</text>
</comment>
<protein>
    <recommendedName>
        <fullName evidence="1">Anthranilate phosphoribosyltransferase</fullName>
        <ecNumber evidence="1">2.4.2.18</ecNumber>
    </recommendedName>
</protein>
<accession>Q63QH1</accession>
<name>TRPD_BURPS</name>
<feature type="chain" id="PRO_0000227142" description="Anthranilate phosphoribosyltransferase">
    <location>
        <begin position="1"/>
        <end position="343"/>
    </location>
</feature>
<feature type="binding site" evidence="1">
    <location>
        <position position="84"/>
    </location>
    <ligand>
        <name>5-phospho-alpha-D-ribose 1-diphosphate</name>
        <dbReference type="ChEBI" id="CHEBI:58017"/>
    </ligand>
</feature>
<feature type="binding site" evidence="1">
    <location>
        <position position="84"/>
    </location>
    <ligand>
        <name>anthranilate</name>
        <dbReference type="ChEBI" id="CHEBI:16567"/>
        <label>1</label>
    </ligand>
</feature>
<feature type="binding site" evidence="1">
    <location>
        <begin position="87"/>
        <end position="88"/>
    </location>
    <ligand>
        <name>5-phospho-alpha-D-ribose 1-diphosphate</name>
        <dbReference type="ChEBI" id="CHEBI:58017"/>
    </ligand>
</feature>
<feature type="binding site" evidence="1">
    <location>
        <position position="92"/>
    </location>
    <ligand>
        <name>5-phospho-alpha-D-ribose 1-diphosphate</name>
        <dbReference type="ChEBI" id="CHEBI:58017"/>
    </ligand>
</feature>
<feature type="binding site" evidence="1">
    <location>
        <begin position="94"/>
        <end position="97"/>
    </location>
    <ligand>
        <name>5-phospho-alpha-D-ribose 1-diphosphate</name>
        <dbReference type="ChEBI" id="CHEBI:58017"/>
    </ligand>
</feature>
<feature type="binding site" evidence="1">
    <location>
        <position position="96"/>
    </location>
    <ligand>
        <name>Mg(2+)</name>
        <dbReference type="ChEBI" id="CHEBI:18420"/>
        <label>1</label>
    </ligand>
</feature>
<feature type="binding site" evidence="1">
    <location>
        <begin position="112"/>
        <end position="120"/>
    </location>
    <ligand>
        <name>5-phospho-alpha-D-ribose 1-diphosphate</name>
        <dbReference type="ChEBI" id="CHEBI:58017"/>
    </ligand>
</feature>
<feature type="binding site" evidence="1">
    <location>
        <position position="115"/>
    </location>
    <ligand>
        <name>anthranilate</name>
        <dbReference type="ChEBI" id="CHEBI:16567"/>
        <label>1</label>
    </ligand>
</feature>
<feature type="binding site" evidence="1">
    <location>
        <position position="124"/>
    </location>
    <ligand>
        <name>5-phospho-alpha-D-ribose 1-diphosphate</name>
        <dbReference type="ChEBI" id="CHEBI:58017"/>
    </ligand>
</feature>
<feature type="binding site" evidence="1">
    <location>
        <position position="170"/>
    </location>
    <ligand>
        <name>anthranilate</name>
        <dbReference type="ChEBI" id="CHEBI:16567"/>
        <label>2</label>
    </ligand>
</feature>
<feature type="binding site" evidence="1">
    <location>
        <position position="229"/>
    </location>
    <ligand>
        <name>Mg(2+)</name>
        <dbReference type="ChEBI" id="CHEBI:18420"/>
        <label>2</label>
    </ligand>
</feature>
<feature type="binding site" evidence="1">
    <location>
        <position position="230"/>
    </location>
    <ligand>
        <name>Mg(2+)</name>
        <dbReference type="ChEBI" id="CHEBI:18420"/>
        <label>1</label>
    </ligand>
</feature>
<feature type="binding site" evidence="1">
    <location>
        <position position="230"/>
    </location>
    <ligand>
        <name>Mg(2+)</name>
        <dbReference type="ChEBI" id="CHEBI:18420"/>
        <label>2</label>
    </ligand>
</feature>
<reference key="1">
    <citation type="journal article" date="2004" name="Proc. Natl. Acad. Sci. U.S.A.">
        <title>Genomic plasticity of the causative agent of melioidosis, Burkholderia pseudomallei.</title>
        <authorList>
            <person name="Holden M.T.G."/>
            <person name="Titball R.W."/>
            <person name="Peacock S.J."/>
            <person name="Cerdeno-Tarraga A.-M."/>
            <person name="Atkins T."/>
            <person name="Crossman L.C."/>
            <person name="Pitt T."/>
            <person name="Churcher C."/>
            <person name="Mungall K.L."/>
            <person name="Bentley S.D."/>
            <person name="Sebaihia M."/>
            <person name="Thomson N.R."/>
            <person name="Bason N."/>
            <person name="Beacham I.R."/>
            <person name="Brooks K."/>
            <person name="Brown K.A."/>
            <person name="Brown N.F."/>
            <person name="Challis G.L."/>
            <person name="Cherevach I."/>
            <person name="Chillingworth T."/>
            <person name="Cronin A."/>
            <person name="Crossett B."/>
            <person name="Davis P."/>
            <person name="DeShazer D."/>
            <person name="Feltwell T."/>
            <person name="Fraser A."/>
            <person name="Hance Z."/>
            <person name="Hauser H."/>
            <person name="Holroyd S."/>
            <person name="Jagels K."/>
            <person name="Keith K.E."/>
            <person name="Maddison M."/>
            <person name="Moule S."/>
            <person name="Price C."/>
            <person name="Quail M.A."/>
            <person name="Rabbinowitsch E."/>
            <person name="Rutherford K."/>
            <person name="Sanders M."/>
            <person name="Simmonds M."/>
            <person name="Songsivilai S."/>
            <person name="Stevens K."/>
            <person name="Tumapa S."/>
            <person name="Vesaratchavest M."/>
            <person name="Whitehead S."/>
            <person name="Yeats C."/>
            <person name="Barrell B.G."/>
            <person name="Oyston P.C.F."/>
            <person name="Parkhill J."/>
        </authorList>
    </citation>
    <scope>NUCLEOTIDE SEQUENCE [LARGE SCALE GENOMIC DNA]</scope>
    <source>
        <strain>K96243</strain>
    </source>
</reference>
<gene>
    <name evidence="1" type="primary">trpD</name>
    <name type="ordered locus">BPSL3052</name>
</gene>
<organism>
    <name type="scientific">Burkholderia pseudomallei (strain K96243)</name>
    <dbReference type="NCBI Taxonomy" id="272560"/>
    <lineage>
        <taxon>Bacteria</taxon>
        <taxon>Pseudomonadati</taxon>
        <taxon>Pseudomonadota</taxon>
        <taxon>Betaproteobacteria</taxon>
        <taxon>Burkholderiales</taxon>
        <taxon>Burkholderiaceae</taxon>
        <taxon>Burkholderia</taxon>
        <taxon>pseudomallei group</taxon>
    </lineage>
</organism>
<proteinExistence type="inferred from homology"/>
<sequence length="343" mass="37017">MTITPQEALQRTIEHREIFHDEMLHLMRLIMRGDMSPVMAAAIITGLRVKKETIGEIAAAATVMREFARRVEVEDNANFVDIVGTGGDGSHTFNISTATMFVAAAAGAKVAKHGNRGVSSKSGSADVLEALGVNIDLQPEQVAASIAETGMGFMFAPNHHPAMRNIAPVRRELGVRTIFNILGPLTNPADAPNQLMGVFHPDLVGIQVRVMQRLGAQHVLVVYGKDGMDEVSLGAATLVGELRDGEVREYEIHPEDFGMQMVSNRTLKVESADESRVMLLEALGNKPGVAREIVTLNAGTALYSADVAGSIADGIQLARDAIASGRAREKVDELVRFTQQFKR</sequence>